<organism>
    <name type="scientific">Dictyostelium discoideum</name>
    <name type="common">Social amoeba</name>
    <dbReference type="NCBI Taxonomy" id="44689"/>
    <lineage>
        <taxon>Eukaryota</taxon>
        <taxon>Amoebozoa</taxon>
        <taxon>Evosea</taxon>
        <taxon>Eumycetozoa</taxon>
        <taxon>Dictyostelia</taxon>
        <taxon>Dictyosteliales</taxon>
        <taxon>Dictyosteliaceae</taxon>
        <taxon>Dictyostelium</taxon>
    </lineage>
</organism>
<proteinExistence type="inferred from homology"/>
<keyword id="KW-0067">ATP-binding</keyword>
<keyword id="KW-0175">Coiled coil</keyword>
<keyword id="KW-0968">Cytoplasmic vesicle</keyword>
<keyword id="KW-0967">Endosome</keyword>
<keyword id="KW-0418">Kinase</keyword>
<keyword id="KW-0472">Membrane</keyword>
<keyword id="KW-0479">Metal-binding</keyword>
<keyword id="KW-0547">Nucleotide-binding</keyword>
<keyword id="KW-1185">Reference proteome</keyword>
<keyword id="KW-0808">Transferase</keyword>
<keyword id="KW-0862">Zinc</keyword>
<keyword id="KW-0863">Zinc-finger</keyword>
<comment type="function">
    <text evidence="1">Dual specificity kinase part of the PI(3,5)P2 regulatory complex which regulates both the synthesis and turnover of phosphatidylinositol 3,5-bisphosphate (PtdIns(3,5)P2). Catalyzes the phosphorylation of phosphatidylinositol 3-phosphate on the fifth hydroxyl of the myo-inositol ring, to form phosphatidylinositol 3,5-bisphosphate.</text>
</comment>
<comment type="catalytic activity">
    <reaction evidence="1">
        <text>a 1,2-diacyl-sn-glycero-3-phospho-(1D-myo-inositol-3-phosphate) + ATP = a 1,2-diacyl-sn-glycero-3-phospho-(1D-myo-inositol-3,5-bisphosphate) + ADP + H(+)</text>
        <dbReference type="Rhea" id="RHEA:13609"/>
        <dbReference type="ChEBI" id="CHEBI:15378"/>
        <dbReference type="ChEBI" id="CHEBI:30616"/>
        <dbReference type="ChEBI" id="CHEBI:57923"/>
        <dbReference type="ChEBI" id="CHEBI:58088"/>
        <dbReference type="ChEBI" id="CHEBI:456216"/>
        <dbReference type="EC" id="2.7.1.150"/>
    </reaction>
    <physiologicalReaction direction="left-to-right" evidence="1">
        <dbReference type="Rhea" id="RHEA:13610"/>
    </physiologicalReaction>
</comment>
<comment type="catalytic activity">
    <reaction evidence="1">
        <text>a 1,2-diacyl-sn-glycero-3-phospho-(1D-myo-inositol) + ATP = a 1,2-diacyl-sn-glycero-3-phospho-(1D-myo-inositol-5-phosphate) + ADP + H(+)</text>
        <dbReference type="Rhea" id="RHEA:44680"/>
        <dbReference type="ChEBI" id="CHEBI:15378"/>
        <dbReference type="ChEBI" id="CHEBI:30616"/>
        <dbReference type="ChEBI" id="CHEBI:57795"/>
        <dbReference type="ChEBI" id="CHEBI:57880"/>
        <dbReference type="ChEBI" id="CHEBI:456216"/>
    </reaction>
    <physiologicalReaction direction="left-to-right" evidence="1">
        <dbReference type="Rhea" id="RHEA:44681"/>
    </physiologicalReaction>
</comment>
<comment type="catalytic activity">
    <reaction evidence="1">
        <text>L-seryl-[protein] + ATP = O-phospho-L-seryl-[protein] + ADP + H(+)</text>
        <dbReference type="Rhea" id="RHEA:17989"/>
        <dbReference type="Rhea" id="RHEA-COMP:9863"/>
        <dbReference type="Rhea" id="RHEA-COMP:11604"/>
        <dbReference type="ChEBI" id="CHEBI:15378"/>
        <dbReference type="ChEBI" id="CHEBI:29999"/>
        <dbReference type="ChEBI" id="CHEBI:30616"/>
        <dbReference type="ChEBI" id="CHEBI:83421"/>
        <dbReference type="ChEBI" id="CHEBI:456216"/>
        <dbReference type="EC" id="2.7.11.1"/>
    </reaction>
    <physiologicalReaction direction="left-to-right" evidence="1">
        <dbReference type="Rhea" id="RHEA:17990"/>
    </physiologicalReaction>
</comment>
<comment type="subcellular location">
    <subcellularLocation>
        <location evidence="1">Endosome membrane</location>
        <topology evidence="2">Peripheral membrane protein</topology>
    </subcellularLocation>
    <subcellularLocation>
        <location evidence="1">Early endosome membrane</location>
        <topology evidence="1">Peripheral membrane protein</topology>
    </subcellularLocation>
    <subcellularLocation>
        <location evidence="1">Cytoplasmic vesicle</location>
        <location evidence="1">Phagosome membrane</location>
        <topology evidence="1">Peripheral membrane protein</topology>
    </subcellularLocation>
    <subcellularLocation>
        <location evidence="1">Late endosome membrane</location>
        <topology evidence="2">Peripheral membrane protein</topology>
    </subcellularLocation>
</comment>
<evidence type="ECO:0000250" key="1">
    <source>
        <dbReference type="UniProtKB" id="Q9Y2I7"/>
    </source>
</evidence>
<evidence type="ECO:0000250" key="2">
    <source>
        <dbReference type="UniProtKB" id="Q9Z1T6"/>
    </source>
</evidence>
<evidence type="ECO:0000255" key="3"/>
<evidence type="ECO:0000255" key="4">
    <source>
        <dbReference type="PROSITE-ProRule" id="PRU00091"/>
    </source>
</evidence>
<evidence type="ECO:0000255" key="5">
    <source>
        <dbReference type="PROSITE-ProRule" id="PRU00781"/>
    </source>
</evidence>
<evidence type="ECO:0000256" key="6">
    <source>
        <dbReference type="SAM" id="MobiDB-lite"/>
    </source>
</evidence>
<accession>B0G126</accession>
<sequence length="2656" mass="299097">MAESFQQLGVGSKSNERSFFSKFFGTDDSQKDFGPLPEIEYSDEQRFNPYPAIYEKKNNNNNNNNNNNNNNNNNNNNNNNNNNNNNNNSNGNGNRSNSSLNNSNNNNQVRRTHSPSVSNKSDESNTTNTNTNITTNTNITTNTNTNTNTNSTNNDTSSNVTQQQLLTNLGQSKIISALKTKFQRPLPPVDDKKFWMPDHSSAVCYECSEEFTTFKRRHHCRLCGQIFCWKCSQKTLTDGKGERVRVCNFCYRRYMAPDDLDMEGYHYDPITGTVISLITNNDDGTNLNNGNGLIKLDGSTHNMNVSLGNSGDNSSFVQSPNNNFSQSPTFSQQQQQQQQQQQQQQQQQQQQQQQQTTGVMSGLNPFSNSTLLFGRNNNNNNQQQQQPIIEEDKQYYGDINTSYNNSYFNNNGFNNFNNEHYNNTNFNATSLNLNSQLHSNLLANTNGELFYDNSQHSISNYGNLDHHQQQQQSNSHGSLSATPSNTPSGLISPIVGAPSILDPNKMIFYSDQEGNYDNLDDYETSSSDGSDNDNEDNHLKSSHSSANDLGTSNTVSTGESNSESKLSSSSNDISIHHHHYHHHHHHSHGNLLKSNSLTPLNLNNNNIIINNNNINNNNNNDNGNDDNNNNNNDNNNNTTIEVDPRHSMPSKTSNTSFSMASLPSIFKLPTIGRNNNNNNNSGSGNSQYLSANSNASNSISPPNSARGSSSNPNSMTPTPTLSSSFSNLPNAETSPPSLVKAKQQQQQQQQQQQQPQPVLQPTIHHPLKTSLPMFSTQSPPPPTNQLAQSTSMAPPPSIFSPLGKLQALSHPSSSSNNQQQQQPQIVKPIIIAPNSLFFSDPSIVSLKSHPKTTNKTKFLEKYPLPKKYYESTENIIDTFGFKRTPSTEGNLLSQMLATSKQKEFDEKERLKISNNPQMSVYIQHINNLVSEQLEKNNIDLSWRSIIIDLTKKATDNVKIFVRKGDKMSTNEYIKIKKIPGGNKSECNYVDGVVMTKILTHKKMKDKFINPKILLLSCSVEFQRVENKFLYFDQLLQQEKEYLRILVSKIAERKPDLVLVEKTVSRHAQDFLLDAGISLALNVKPKLLERLGRCLGGEVLPTLDIIYNNNSNNNNSNSIQLQQQQNSNSPASLQNSTTTTNNNNNNNNNSTTLGSCGQFKVITYSEIGLKEKEILGKKTLMYFEKCPVELGATIIIRGEDLAVLKIIKKILKLSIFSMHNAYLELKYLNDQSSTSNLLFVNNNGQNLSCSPQIKFPLPKTYPTIPWKYQFTSQHIPVKKALLTSFYKPHSDFGQQQSVIQWTSDDEVLGIGTSDAFKHCDMKFPIENESIYDHQSIVFSHSIFCNSNQCIPFEIHAIDYYTDNDLTLGEFLSKFCFSLHICNIKECNRPLIEHERTFMNSTTRINICVQKTQTIQDRPTNSSPAQQRNQPVQRAGINVINLCKICNKFSPESPMSEEAWEMSFGKFLELCFFGFLPIKTGISPECSHNNAKDHISYFYYQDLAAIFSYEPLPSLELSLPPKNLKATYTEKQRQSVRAKELEIMNQCANQVYSAIHERLYEIGQENQGDRVQELIPSLVQEKQLICSKIESLLLLPESAHKSNDQIINLTKLLYANFMTWNSQLTGLIDSTSYQRSKRNVQQQQQQQQHQQSQQPQPQILIGGDVYSDSHLHTDSVKKINSKQHSHNTILLQSIQSNQEQQLEQQEEFEINVNNNNNNNNNNNNNNNNNNNNNNNNNNNNNNNNNNNNTIDNKSENENENKNENKNENENENENKNENKNENENENKKENENQLEIKNENNDSGEEITNNNNNNNNNNNNNNNNNNNNNNNIDNNNNKDENISSTPLLSPSSVLGVSNSGINQAFLNAPNNTYNSVEQDLTLPLNHQSLNFAVGGLVSPGSSSGGLPVGSVPNSSSMPSIHNGGSGNIPSNLVGSASGLSTNYSPNALKDPKKLKIIDTIAGIVSSISQTRILGPTMPYLLLESTDNVALFENEPSTTIAYTLSSSDFKIALNSLLDEEWKRISEIEKQYELQQQQQQDSQDLESSSQQQQQQQQQQQEQQEQPSLPTPSHPLSQSMNFSPSSLLKISSSSLPKDNNNSSENKPNSETNDIVRSRGSVKLSGSPISISPLSNAFEKRKSTSLSSSANNSPISSILEKEKKLKQQSPSLSNSLSGQTIINNNQQQQQQQQPSPIIIDEKDDRNTEKSSIIETDSIIEDLNINQDESNITNEDGGKIGDYESELLYDHHQQGDSENNNNNNNNNNNNNNNNNNNNNNNNNNNTNNNNEQQINNSDTEGDSDSIKSSNSNIYSEKNIKLSKLMVSTQRKEIRSRFKFEKNGYELNIFCSSYYPVQFHALREYMCGDQEFIQSLTRSKIWNAKGGKSGSSWNKTLDDRFILKQVSRIELESFLDFAPLYFEYICKSFLNQIPTALCKILGVFTVRWKDSNGKALKKDLIVMENLFHSKCISKTYDLKGSLRGRLVKNESEVLLDENLLQASFASPICLGEYDKTRVALAVWNDTAFLSSLNVMDYSLLSGIDNQSNQLVVGIIDYMRKFTWDKALEMKVKQSGIMGGGGKVPTVISPKQYKLRFRDAMWLYFTLSPDKFTKVKHLMPYEKKKNNNNNYNYNNFNNNNFNNNNNISNNGNGNINQRQVQQINK</sequence>
<feature type="chain" id="PRO_0000387998" description="1-phosphatidylinositol 3-phosphate 5-kinase">
    <location>
        <begin position="1"/>
        <end position="2656"/>
    </location>
</feature>
<feature type="domain" description="PIPK" evidence="5">
    <location>
        <begin position="2275"/>
        <end position="2596"/>
    </location>
</feature>
<feature type="zinc finger region" description="FYVE-type" evidence="4">
    <location>
        <begin position="198"/>
        <end position="255"/>
    </location>
</feature>
<feature type="region of interest" description="Disordered" evidence="6">
    <location>
        <begin position="24"/>
        <end position="159"/>
    </location>
</feature>
<feature type="region of interest" description="Disordered" evidence="6">
    <location>
        <begin position="304"/>
        <end position="383"/>
    </location>
</feature>
<feature type="region of interest" description="Disordered" evidence="6">
    <location>
        <begin position="465"/>
        <end position="495"/>
    </location>
</feature>
<feature type="region of interest" description="Disordered" evidence="6">
    <location>
        <begin position="517"/>
        <end position="570"/>
    </location>
</feature>
<feature type="region of interest" description="Disordered" evidence="6">
    <location>
        <begin position="618"/>
        <end position="657"/>
    </location>
</feature>
<feature type="region of interest" description="Disordered" evidence="6">
    <location>
        <begin position="670"/>
        <end position="823"/>
    </location>
</feature>
<feature type="region of interest" description="Disordered" evidence="6">
    <location>
        <begin position="1115"/>
        <end position="1150"/>
    </location>
</feature>
<feature type="region of interest" description="Disordered" evidence="6">
    <location>
        <begin position="1633"/>
        <end position="1659"/>
    </location>
</feature>
<feature type="region of interest" description="Disordered" evidence="6">
    <location>
        <begin position="1710"/>
        <end position="1844"/>
    </location>
</feature>
<feature type="region of interest" description="Disordered" evidence="6">
    <location>
        <begin position="2031"/>
        <end position="2127"/>
    </location>
</feature>
<feature type="region of interest" description="Disordered" evidence="6">
    <location>
        <begin position="2179"/>
        <end position="2208"/>
    </location>
</feature>
<feature type="region of interest" description="Disordered" evidence="6">
    <location>
        <begin position="2246"/>
        <end position="2304"/>
    </location>
</feature>
<feature type="region of interest" description="Disordered" evidence="6">
    <location>
        <begin position="2617"/>
        <end position="2656"/>
    </location>
</feature>
<feature type="coiled-coil region" evidence="3">
    <location>
        <begin position="1741"/>
        <end position="1823"/>
    </location>
</feature>
<feature type="coiled-coil region" evidence="3">
    <location>
        <begin position="2019"/>
        <end position="2061"/>
    </location>
</feature>
<feature type="compositionally biased region" description="Low complexity" evidence="6">
    <location>
        <begin position="59"/>
        <end position="107"/>
    </location>
</feature>
<feature type="compositionally biased region" description="Low complexity" evidence="6">
    <location>
        <begin position="124"/>
        <end position="159"/>
    </location>
</feature>
<feature type="compositionally biased region" description="Polar residues" evidence="6">
    <location>
        <begin position="304"/>
        <end position="331"/>
    </location>
</feature>
<feature type="compositionally biased region" description="Low complexity" evidence="6">
    <location>
        <begin position="332"/>
        <end position="355"/>
    </location>
</feature>
<feature type="compositionally biased region" description="Polar residues" evidence="6">
    <location>
        <begin position="356"/>
        <end position="371"/>
    </location>
</feature>
<feature type="compositionally biased region" description="Polar residues" evidence="6">
    <location>
        <begin position="473"/>
        <end position="489"/>
    </location>
</feature>
<feature type="compositionally biased region" description="Polar residues" evidence="6">
    <location>
        <begin position="542"/>
        <end position="557"/>
    </location>
</feature>
<feature type="compositionally biased region" description="Low complexity" evidence="6">
    <location>
        <begin position="558"/>
        <end position="570"/>
    </location>
</feature>
<feature type="compositionally biased region" description="Low complexity" evidence="6">
    <location>
        <begin position="618"/>
        <end position="637"/>
    </location>
</feature>
<feature type="compositionally biased region" description="Low complexity" evidence="6">
    <location>
        <begin position="674"/>
        <end position="730"/>
    </location>
</feature>
<feature type="compositionally biased region" description="Low complexity" evidence="6">
    <location>
        <begin position="743"/>
        <end position="757"/>
    </location>
</feature>
<feature type="compositionally biased region" description="Low complexity" evidence="6">
    <location>
        <begin position="811"/>
        <end position="823"/>
    </location>
</feature>
<feature type="compositionally biased region" description="Low complexity" evidence="6">
    <location>
        <begin position="1639"/>
        <end position="1656"/>
    </location>
</feature>
<feature type="compositionally biased region" description="Low complexity" evidence="6">
    <location>
        <begin position="1710"/>
        <end position="1746"/>
    </location>
</feature>
<feature type="compositionally biased region" description="Basic and acidic residues" evidence="6">
    <location>
        <begin position="1750"/>
        <end position="1798"/>
    </location>
</feature>
<feature type="compositionally biased region" description="Low complexity" evidence="6">
    <location>
        <begin position="1807"/>
        <end position="1833"/>
    </location>
</feature>
<feature type="compositionally biased region" description="Low complexity" evidence="6">
    <location>
        <begin position="2031"/>
        <end position="2061"/>
    </location>
</feature>
<feature type="compositionally biased region" description="Low complexity" evidence="6">
    <location>
        <begin position="2078"/>
        <end position="2107"/>
    </location>
</feature>
<feature type="compositionally biased region" description="Low complexity" evidence="6">
    <location>
        <begin position="2118"/>
        <end position="2127"/>
    </location>
</feature>
<feature type="compositionally biased region" description="Basic and acidic residues" evidence="6">
    <location>
        <begin position="2193"/>
        <end position="2202"/>
    </location>
</feature>
<feature type="compositionally biased region" description="Low complexity" evidence="6">
    <location>
        <begin position="2252"/>
        <end position="2283"/>
    </location>
</feature>
<feature type="compositionally biased region" description="Low complexity" evidence="6">
    <location>
        <begin position="2618"/>
        <end position="2647"/>
    </location>
</feature>
<feature type="binding site" evidence="4">
    <location>
        <position position="204"/>
    </location>
    <ligand>
        <name>Zn(2+)</name>
        <dbReference type="ChEBI" id="CHEBI:29105"/>
        <label>1</label>
    </ligand>
</feature>
<feature type="binding site" evidence="4">
    <location>
        <position position="207"/>
    </location>
    <ligand>
        <name>Zn(2+)</name>
        <dbReference type="ChEBI" id="CHEBI:29105"/>
        <label>1</label>
    </ligand>
</feature>
<feature type="binding site" evidence="4">
    <location>
        <position position="220"/>
    </location>
    <ligand>
        <name>Zn(2+)</name>
        <dbReference type="ChEBI" id="CHEBI:29105"/>
        <label>2</label>
    </ligand>
</feature>
<feature type="binding site" evidence="4">
    <location>
        <position position="223"/>
    </location>
    <ligand>
        <name>Zn(2+)</name>
        <dbReference type="ChEBI" id="CHEBI:29105"/>
        <label>2</label>
    </ligand>
</feature>
<feature type="binding site" evidence="4">
    <location>
        <position position="228"/>
    </location>
    <ligand>
        <name>Zn(2+)</name>
        <dbReference type="ChEBI" id="CHEBI:29105"/>
        <label>1</label>
    </ligand>
</feature>
<feature type="binding site" evidence="4">
    <location>
        <position position="231"/>
    </location>
    <ligand>
        <name>Zn(2+)</name>
        <dbReference type="ChEBI" id="CHEBI:29105"/>
        <label>1</label>
    </ligand>
</feature>
<feature type="binding site" evidence="4">
    <location>
        <position position="247"/>
    </location>
    <ligand>
        <name>Zn(2+)</name>
        <dbReference type="ChEBI" id="CHEBI:29105"/>
        <label>2</label>
    </ligand>
</feature>
<feature type="binding site" evidence="4">
    <location>
        <position position="250"/>
    </location>
    <ligand>
        <name>Zn(2+)</name>
        <dbReference type="ChEBI" id="CHEBI:29105"/>
        <label>2</label>
    </ligand>
</feature>
<dbReference type="EC" id="2.7.1.150"/>
<dbReference type="EC" id="2.7.11.1" evidence="1"/>
<dbReference type="EMBL" id="AAFI02000027">
    <property type="protein sequence ID" value="EDR41082.1"/>
    <property type="molecule type" value="Genomic_DNA"/>
</dbReference>
<dbReference type="RefSeq" id="XP_001732989.1">
    <property type="nucleotide sequence ID" value="XM_001732937.1"/>
</dbReference>
<dbReference type="SMR" id="B0G126"/>
<dbReference type="FunCoup" id="B0G126">
    <property type="interactions" value="780"/>
</dbReference>
<dbReference type="STRING" id="44689.B0G126"/>
<dbReference type="GlyGen" id="B0G126">
    <property type="glycosylation" value="2 sites"/>
</dbReference>
<dbReference type="PaxDb" id="44689-DDB0234209"/>
<dbReference type="EnsemblProtists" id="EDR41082">
    <property type="protein sequence ID" value="EDR41082"/>
    <property type="gene ID" value="DDB_G0279149"/>
</dbReference>
<dbReference type="GeneID" id="8621895"/>
<dbReference type="KEGG" id="ddi:DDB_G0279149"/>
<dbReference type="dictyBase" id="DDB_G0279149">
    <property type="gene designation" value="pip5k3"/>
</dbReference>
<dbReference type="VEuPathDB" id="AmoebaDB:DDB_G0279149"/>
<dbReference type="eggNOG" id="KOG0230">
    <property type="taxonomic scope" value="Eukaryota"/>
</dbReference>
<dbReference type="HOGENOM" id="CLU_227573_0_0_1"/>
<dbReference type="InParanoid" id="B0G126"/>
<dbReference type="OMA" id="LEVPDIW"/>
<dbReference type="PRO" id="PR:B0G126"/>
<dbReference type="Proteomes" id="UP000002195">
    <property type="component" value="Chromosome 3"/>
</dbReference>
<dbReference type="GO" id="GO:0031901">
    <property type="term" value="C:early endosome membrane"/>
    <property type="evidence" value="ECO:0007669"/>
    <property type="project" value="UniProtKB-SubCell"/>
</dbReference>
<dbReference type="GO" id="GO:0010008">
    <property type="term" value="C:endosome membrane"/>
    <property type="evidence" value="ECO:0000318"/>
    <property type="project" value="GO_Central"/>
</dbReference>
<dbReference type="GO" id="GO:0031902">
    <property type="term" value="C:late endosome membrane"/>
    <property type="evidence" value="ECO:0007669"/>
    <property type="project" value="UniProtKB-SubCell"/>
</dbReference>
<dbReference type="GO" id="GO:0044354">
    <property type="term" value="C:macropinosome"/>
    <property type="evidence" value="ECO:0000314"/>
    <property type="project" value="dictyBase"/>
</dbReference>
<dbReference type="GO" id="GO:0045335">
    <property type="term" value="C:phagocytic vesicle"/>
    <property type="evidence" value="ECO:0000314"/>
    <property type="project" value="dictyBase"/>
</dbReference>
<dbReference type="GO" id="GO:0030670">
    <property type="term" value="C:phagocytic vesicle membrane"/>
    <property type="evidence" value="ECO:0007669"/>
    <property type="project" value="UniProtKB-SubCell"/>
</dbReference>
<dbReference type="GO" id="GO:0000285">
    <property type="term" value="F:1-phosphatidylinositol-3-phosphate 5-kinase activity"/>
    <property type="evidence" value="ECO:0000250"/>
    <property type="project" value="dictyBase"/>
</dbReference>
<dbReference type="GO" id="GO:0052810">
    <property type="term" value="F:1-phosphatidylinositol-5-kinase activity"/>
    <property type="evidence" value="ECO:0007669"/>
    <property type="project" value="RHEA"/>
</dbReference>
<dbReference type="GO" id="GO:0005524">
    <property type="term" value="F:ATP binding"/>
    <property type="evidence" value="ECO:0007669"/>
    <property type="project" value="UniProtKB-KW"/>
</dbReference>
<dbReference type="GO" id="GO:0106310">
    <property type="term" value="F:protein serine kinase activity"/>
    <property type="evidence" value="ECO:0007669"/>
    <property type="project" value="RHEA"/>
</dbReference>
<dbReference type="GO" id="GO:0008270">
    <property type="term" value="F:zinc ion binding"/>
    <property type="evidence" value="ECO:0007669"/>
    <property type="project" value="UniProtKB-KW"/>
</dbReference>
<dbReference type="GO" id="GO:0050829">
    <property type="term" value="P:defense response to Gram-negative bacterium"/>
    <property type="evidence" value="ECO:0000315"/>
    <property type="project" value="dictyBase"/>
</dbReference>
<dbReference type="GO" id="GO:0090383">
    <property type="term" value="P:phagosome acidification"/>
    <property type="evidence" value="ECO:0000315"/>
    <property type="project" value="dictyBase"/>
</dbReference>
<dbReference type="GO" id="GO:0046854">
    <property type="term" value="P:phosphatidylinositol phosphate biosynthetic process"/>
    <property type="evidence" value="ECO:0000318"/>
    <property type="project" value="GO_Central"/>
</dbReference>
<dbReference type="GO" id="GO:0006644">
    <property type="term" value="P:phospholipid metabolic process"/>
    <property type="evidence" value="ECO:0000250"/>
    <property type="project" value="dictyBase"/>
</dbReference>
<dbReference type="GO" id="GO:1905161">
    <property type="term" value="P:protein localization to phagocytic vesicle"/>
    <property type="evidence" value="ECO:0000315"/>
    <property type="project" value="dictyBase"/>
</dbReference>
<dbReference type="GO" id="GO:0044671">
    <property type="term" value="P:sorocarp spore cell differentiation"/>
    <property type="evidence" value="ECO:0000315"/>
    <property type="project" value="dictyBase"/>
</dbReference>
<dbReference type="GO" id="GO:0007033">
    <property type="term" value="P:vacuole organization"/>
    <property type="evidence" value="ECO:0000318"/>
    <property type="project" value="GO_Central"/>
</dbReference>
<dbReference type="CDD" id="cd03334">
    <property type="entry name" value="Fab1_TCP"/>
    <property type="match status" value="1"/>
</dbReference>
<dbReference type="CDD" id="cd15725">
    <property type="entry name" value="FYVE_PIKfyve_Fab1"/>
    <property type="match status" value="1"/>
</dbReference>
<dbReference type="CDD" id="cd17300">
    <property type="entry name" value="PIPKc_PIKfyve"/>
    <property type="match status" value="1"/>
</dbReference>
<dbReference type="FunFam" id="3.30.810.10:FF:000001">
    <property type="entry name" value="1-phosphatidylinositol 3-phosphate 5-kinase FAB1"/>
    <property type="match status" value="1"/>
</dbReference>
<dbReference type="FunFam" id="3.50.7.10:FF:000007">
    <property type="entry name" value="1-phosphatidylinositol 3-phosphate 5-kinase isoform X1"/>
    <property type="match status" value="1"/>
</dbReference>
<dbReference type="FunFam" id="3.30.40.10:FF:000384">
    <property type="entry name" value="1-phosphatidylinositol-3-phosphate 5-kinase FAB1B"/>
    <property type="match status" value="1"/>
</dbReference>
<dbReference type="Gene3D" id="3.30.810.10">
    <property type="entry name" value="2-Layer Sandwich"/>
    <property type="match status" value="1"/>
</dbReference>
<dbReference type="Gene3D" id="3.50.7.10">
    <property type="entry name" value="GroEL"/>
    <property type="match status" value="1"/>
</dbReference>
<dbReference type="Gene3D" id="3.30.800.10">
    <property type="entry name" value="Phosphatidylinositol Phosphate Kinase II Beta"/>
    <property type="match status" value="1"/>
</dbReference>
<dbReference type="Gene3D" id="3.30.40.10">
    <property type="entry name" value="Zinc/RING finger domain, C3HC4 (zinc finger)"/>
    <property type="match status" value="1"/>
</dbReference>
<dbReference type="InterPro" id="IPR002423">
    <property type="entry name" value="Cpn60/GroEL/TCP-1"/>
</dbReference>
<dbReference type="InterPro" id="IPR027409">
    <property type="entry name" value="GroEL-like_apical_dom_sf"/>
</dbReference>
<dbReference type="InterPro" id="IPR044769">
    <property type="entry name" value="PIKfyve_PIPKc"/>
</dbReference>
<dbReference type="InterPro" id="IPR027483">
    <property type="entry name" value="PInositol-4-P-4/5-kinase_C_sf"/>
</dbReference>
<dbReference type="InterPro" id="IPR002498">
    <property type="entry name" value="PInositol-4-P-4/5-kinase_core"/>
</dbReference>
<dbReference type="InterPro" id="IPR027484">
    <property type="entry name" value="PInositol-4-P-5-kinase_N"/>
</dbReference>
<dbReference type="InterPro" id="IPR000306">
    <property type="entry name" value="Znf_FYVE"/>
</dbReference>
<dbReference type="InterPro" id="IPR017455">
    <property type="entry name" value="Znf_FYVE-rel"/>
</dbReference>
<dbReference type="InterPro" id="IPR011011">
    <property type="entry name" value="Znf_FYVE_PHD"/>
</dbReference>
<dbReference type="InterPro" id="IPR013083">
    <property type="entry name" value="Znf_RING/FYVE/PHD"/>
</dbReference>
<dbReference type="PANTHER" id="PTHR45748">
    <property type="entry name" value="1-PHOSPHATIDYLINOSITOL 3-PHOSPHATE 5-KINASE-RELATED"/>
    <property type="match status" value="1"/>
</dbReference>
<dbReference type="PANTHER" id="PTHR45748:SF7">
    <property type="entry name" value="1-PHOSPHATIDYLINOSITOL 3-PHOSPHATE 5-KINASE-RELATED"/>
    <property type="match status" value="1"/>
</dbReference>
<dbReference type="Pfam" id="PF00118">
    <property type="entry name" value="Cpn60_TCP1"/>
    <property type="match status" value="1"/>
</dbReference>
<dbReference type="Pfam" id="PF01363">
    <property type="entry name" value="FYVE"/>
    <property type="match status" value="1"/>
</dbReference>
<dbReference type="Pfam" id="PF01504">
    <property type="entry name" value="PIP5K"/>
    <property type="match status" value="1"/>
</dbReference>
<dbReference type="SMART" id="SM00064">
    <property type="entry name" value="FYVE"/>
    <property type="match status" value="1"/>
</dbReference>
<dbReference type="SMART" id="SM00330">
    <property type="entry name" value="PIPKc"/>
    <property type="match status" value="1"/>
</dbReference>
<dbReference type="SUPFAM" id="SSF57903">
    <property type="entry name" value="FYVE/PHD zinc finger"/>
    <property type="match status" value="1"/>
</dbReference>
<dbReference type="SUPFAM" id="SSF52029">
    <property type="entry name" value="GroEL apical domain-like"/>
    <property type="match status" value="1"/>
</dbReference>
<dbReference type="SUPFAM" id="SSF56104">
    <property type="entry name" value="SAICAR synthase-like"/>
    <property type="match status" value="1"/>
</dbReference>
<dbReference type="PROSITE" id="PS51455">
    <property type="entry name" value="PIPK"/>
    <property type="match status" value="1"/>
</dbReference>
<dbReference type="PROSITE" id="PS50178">
    <property type="entry name" value="ZF_FYVE"/>
    <property type="match status" value="1"/>
</dbReference>
<gene>
    <name type="primary">pip5k3</name>
    <name type="ORF">DDB_G0279149</name>
</gene>
<protein>
    <recommendedName>
        <fullName>1-phosphatidylinositol 3-phosphate 5-kinase</fullName>
        <shortName>Phosphatidylinositol 3-phosphate 5-kinase</shortName>
        <ecNumber>2.7.1.150</ecNumber>
    </recommendedName>
    <alternativeName>
        <fullName>FYVE finger-containing phosphoinositide kinase</fullName>
    </alternativeName>
    <alternativeName>
        <fullName>PIKfyve</fullName>
    </alternativeName>
    <alternativeName>
        <fullName>Phosphatidylinositol 3-phosphate 5-kinase type III</fullName>
        <shortName>PIPkin-III</shortName>
        <shortName>Type III PIP kinase</shortName>
    </alternativeName>
    <alternativeName>
        <fullName>Serine-protein kinase PIKFYVE</fullName>
        <ecNumber evidence="1">2.7.11.1</ecNumber>
    </alternativeName>
</protein>
<name>FYV1_DICDI</name>
<reference key="1">
    <citation type="journal article" date="2005" name="Nature">
        <title>The genome of the social amoeba Dictyostelium discoideum.</title>
        <authorList>
            <person name="Eichinger L."/>
            <person name="Pachebat J.A."/>
            <person name="Gloeckner G."/>
            <person name="Rajandream M.A."/>
            <person name="Sucgang R."/>
            <person name="Berriman M."/>
            <person name="Song J."/>
            <person name="Olsen R."/>
            <person name="Szafranski K."/>
            <person name="Xu Q."/>
            <person name="Tunggal B."/>
            <person name="Kummerfeld S."/>
            <person name="Madera M."/>
            <person name="Konfortov B.A."/>
            <person name="Rivero F."/>
            <person name="Bankier A.T."/>
            <person name="Lehmann R."/>
            <person name="Hamlin N."/>
            <person name="Davies R."/>
            <person name="Gaudet P."/>
            <person name="Fey P."/>
            <person name="Pilcher K."/>
            <person name="Chen G."/>
            <person name="Saunders D."/>
            <person name="Sodergren E.J."/>
            <person name="Davis P."/>
            <person name="Kerhornou A."/>
            <person name="Nie X."/>
            <person name="Hall N."/>
            <person name="Anjard C."/>
            <person name="Hemphill L."/>
            <person name="Bason N."/>
            <person name="Farbrother P."/>
            <person name="Desany B."/>
            <person name="Just E."/>
            <person name="Morio T."/>
            <person name="Rost R."/>
            <person name="Churcher C.M."/>
            <person name="Cooper J."/>
            <person name="Haydock S."/>
            <person name="van Driessche N."/>
            <person name="Cronin A."/>
            <person name="Goodhead I."/>
            <person name="Muzny D.M."/>
            <person name="Mourier T."/>
            <person name="Pain A."/>
            <person name="Lu M."/>
            <person name="Harper D."/>
            <person name="Lindsay R."/>
            <person name="Hauser H."/>
            <person name="James K.D."/>
            <person name="Quiles M."/>
            <person name="Madan Babu M."/>
            <person name="Saito T."/>
            <person name="Buchrieser C."/>
            <person name="Wardroper A."/>
            <person name="Felder M."/>
            <person name="Thangavelu M."/>
            <person name="Johnson D."/>
            <person name="Knights A."/>
            <person name="Loulseged H."/>
            <person name="Mungall K.L."/>
            <person name="Oliver K."/>
            <person name="Price C."/>
            <person name="Quail M.A."/>
            <person name="Urushihara H."/>
            <person name="Hernandez J."/>
            <person name="Rabbinowitsch E."/>
            <person name="Steffen D."/>
            <person name="Sanders M."/>
            <person name="Ma J."/>
            <person name="Kohara Y."/>
            <person name="Sharp S."/>
            <person name="Simmonds M.N."/>
            <person name="Spiegler S."/>
            <person name="Tivey A."/>
            <person name="Sugano S."/>
            <person name="White B."/>
            <person name="Walker D."/>
            <person name="Woodward J.R."/>
            <person name="Winckler T."/>
            <person name="Tanaka Y."/>
            <person name="Shaulsky G."/>
            <person name="Schleicher M."/>
            <person name="Weinstock G.M."/>
            <person name="Rosenthal A."/>
            <person name="Cox E.C."/>
            <person name="Chisholm R.L."/>
            <person name="Gibbs R.A."/>
            <person name="Loomis W.F."/>
            <person name="Platzer M."/>
            <person name="Kay R.R."/>
            <person name="Williams J.G."/>
            <person name="Dear P.H."/>
            <person name="Noegel A.A."/>
            <person name="Barrell B.G."/>
            <person name="Kuspa A."/>
        </authorList>
    </citation>
    <scope>NUCLEOTIDE SEQUENCE [LARGE SCALE GENOMIC DNA]</scope>
    <source>
        <strain>AX4</strain>
    </source>
</reference>